<evidence type="ECO:0000255" key="1">
    <source>
        <dbReference type="HAMAP-Rule" id="MF_00061"/>
    </source>
</evidence>
<proteinExistence type="inferred from homology"/>
<keyword id="KW-0067">ATP-binding</keyword>
<keyword id="KW-0414">Isoprene biosynthesis</keyword>
<keyword id="KW-0418">Kinase</keyword>
<keyword id="KW-0547">Nucleotide-binding</keyword>
<keyword id="KW-0808">Transferase</keyword>
<protein>
    <recommendedName>
        <fullName evidence="1">4-diphosphocytidyl-2-C-methyl-D-erythritol kinase</fullName>
        <shortName evidence="1">CMK</shortName>
        <ecNumber evidence="1">2.7.1.148</ecNumber>
    </recommendedName>
    <alternativeName>
        <fullName evidence="1">4-(cytidine-5'-diphospho)-2-C-methyl-D-erythritol kinase</fullName>
    </alternativeName>
</protein>
<name>ISPE_CLAM3</name>
<dbReference type="EC" id="2.7.1.148" evidence="1"/>
<dbReference type="EMBL" id="AM711867">
    <property type="protein sequence ID" value="CAN02442.1"/>
    <property type="molecule type" value="Genomic_DNA"/>
</dbReference>
<dbReference type="RefSeq" id="WP_012039056.1">
    <property type="nucleotide sequence ID" value="NC_009480.1"/>
</dbReference>
<dbReference type="SMR" id="A5CTL3"/>
<dbReference type="KEGG" id="cmi:CMM_2367"/>
<dbReference type="eggNOG" id="COG1947">
    <property type="taxonomic scope" value="Bacteria"/>
</dbReference>
<dbReference type="HOGENOM" id="CLU_053057_1_1_11"/>
<dbReference type="OrthoDB" id="3173073at2"/>
<dbReference type="UniPathway" id="UPA00056">
    <property type="reaction ID" value="UER00094"/>
</dbReference>
<dbReference type="Proteomes" id="UP000001564">
    <property type="component" value="Chromosome"/>
</dbReference>
<dbReference type="GO" id="GO:0050515">
    <property type="term" value="F:4-(cytidine 5'-diphospho)-2-C-methyl-D-erythritol kinase activity"/>
    <property type="evidence" value="ECO:0007669"/>
    <property type="project" value="UniProtKB-UniRule"/>
</dbReference>
<dbReference type="GO" id="GO:0005524">
    <property type="term" value="F:ATP binding"/>
    <property type="evidence" value="ECO:0007669"/>
    <property type="project" value="UniProtKB-UniRule"/>
</dbReference>
<dbReference type="GO" id="GO:0019288">
    <property type="term" value="P:isopentenyl diphosphate biosynthetic process, methylerythritol 4-phosphate pathway"/>
    <property type="evidence" value="ECO:0007669"/>
    <property type="project" value="UniProtKB-UniRule"/>
</dbReference>
<dbReference type="GO" id="GO:0016114">
    <property type="term" value="P:terpenoid biosynthetic process"/>
    <property type="evidence" value="ECO:0007669"/>
    <property type="project" value="InterPro"/>
</dbReference>
<dbReference type="Gene3D" id="3.30.230.10">
    <property type="match status" value="1"/>
</dbReference>
<dbReference type="Gene3D" id="3.30.70.890">
    <property type="entry name" value="GHMP kinase, C-terminal domain"/>
    <property type="match status" value="1"/>
</dbReference>
<dbReference type="HAMAP" id="MF_00061">
    <property type="entry name" value="IspE"/>
    <property type="match status" value="1"/>
</dbReference>
<dbReference type="InterPro" id="IPR013750">
    <property type="entry name" value="GHMP_kinase_C_dom"/>
</dbReference>
<dbReference type="InterPro" id="IPR036554">
    <property type="entry name" value="GHMP_kinase_C_sf"/>
</dbReference>
<dbReference type="InterPro" id="IPR006204">
    <property type="entry name" value="GHMP_kinase_N_dom"/>
</dbReference>
<dbReference type="InterPro" id="IPR004424">
    <property type="entry name" value="IspE"/>
</dbReference>
<dbReference type="InterPro" id="IPR020568">
    <property type="entry name" value="Ribosomal_Su5_D2-typ_SF"/>
</dbReference>
<dbReference type="InterPro" id="IPR014721">
    <property type="entry name" value="Ribsml_uS5_D2-typ_fold_subgr"/>
</dbReference>
<dbReference type="NCBIfam" id="TIGR00154">
    <property type="entry name" value="ispE"/>
    <property type="match status" value="1"/>
</dbReference>
<dbReference type="NCBIfam" id="NF002870">
    <property type="entry name" value="PRK03188.1"/>
    <property type="match status" value="1"/>
</dbReference>
<dbReference type="PANTHER" id="PTHR43527">
    <property type="entry name" value="4-DIPHOSPHOCYTIDYL-2-C-METHYL-D-ERYTHRITOL KINASE, CHLOROPLASTIC"/>
    <property type="match status" value="1"/>
</dbReference>
<dbReference type="PANTHER" id="PTHR43527:SF2">
    <property type="entry name" value="4-DIPHOSPHOCYTIDYL-2-C-METHYL-D-ERYTHRITOL KINASE, CHLOROPLASTIC"/>
    <property type="match status" value="1"/>
</dbReference>
<dbReference type="Pfam" id="PF08544">
    <property type="entry name" value="GHMP_kinases_C"/>
    <property type="match status" value="1"/>
</dbReference>
<dbReference type="Pfam" id="PF00288">
    <property type="entry name" value="GHMP_kinases_N"/>
    <property type="match status" value="1"/>
</dbReference>
<dbReference type="PIRSF" id="PIRSF010376">
    <property type="entry name" value="IspE"/>
    <property type="match status" value="1"/>
</dbReference>
<dbReference type="SUPFAM" id="SSF55060">
    <property type="entry name" value="GHMP Kinase, C-terminal domain"/>
    <property type="match status" value="1"/>
</dbReference>
<dbReference type="SUPFAM" id="SSF54211">
    <property type="entry name" value="Ribosomal protein S5 domain 2-like"/>
    <property type="match status" value="1"/>
</dbReference>
<comment type="function">
    <text evidence="1">Catalyzes the phosphorylation of the position 2 hydroxy group of 4-diphosphocytidyl-2C-methyl-D-erythritol.</text>
</comment>
<comment type="catalytic activity">
    <reaction evidence="1">
        <text>4-CDP-2-C-methyl-D-erythritol + ATP = 4-CDP-2-C-methyl-D-erythritol 2-phosphate + ADP + H(+)</text>
        <dbReference type="Rhea" id="RHEA:18437"/>
        <dbReference type="ChEBI" id="CHEBI:15378"/>
        <dbReference type="ChEBI" id="CHEBI:30616"/>
        <dbReference type="ChEBI" id="CHEBI:57823"/>
        <dbReference type="ChEBI" id="CHEBI:57919"/>
        <dbReference type="ChEBI" id="CHEBI:456216"/>
        <dbReference type="EC" id="2.7.1.148"/>
    </reaction>
</comment>
<comment type="pathway">
    <text evidence="1">Isoprenoid biosynthesis; isopentenyl diphosphate biosynthesis via DXP pathway; isopentenyl diphosphate from 1-deoxy-D-xylulose 5-phosphate: step 3/6.</text>
</comment>
<comment type="similarity">
    <text evidence="1">Belongs to the GHMP kinase family. IspE subfamily.</text>
</comment>
<gene>
    <name evidence="1" type="primary">ispE</name>
    <name type="ordered locus">CMM_2367</name>
</gene>
<organism>
    <name type="scientific">Clavibacter michiganensis subsp. michiganensis (strain NCPPB 382)</name>
    <dbReference type="NCBI Taxonomy" id="443906"/>
    <lineage>
        <taxon>Bacteria</taxon>
        <taxon>Bacillati</taxon>
        <taxon>Actinomycetota</taxon>
        <taxon>Actinomycetes</taxon>
        <taxon>Micrococcales</taxon>
        <taxon>Microbacteriaceae</taxon>
        <taxon>Clavibacter</taxon>
    </lineage>
</organism>
<reference key="1">
    <citation type="journal article" date="2008" name="J. Bacteriol.">
        <title>The genome sequence of the tomato-pathogenic actinomycete Clavibacter michiganensis subsp. michiganensis NCPPB382 reveals a large island involved in pathogenicity.</title>
        <authorList>
            <person name="Gartemann K.-H."/>
            <person name="Abt B."/>
            <person name="Bekel T."/>
            <person name="Burger A."/>
            <person name="Engemann J."/>
            <person name="Fluegel M."/>
            <person name="Gaigalat L."/>
            <person name="Goesmann A."/>
            <person name="Graefen I."/>
            <person name="Kalinowski J."/>
            <person name="Kaup O."/>
            <person name="Kirchner O."/>
            <person name="Krause L."/>
            <person name="Linke B."/>
            <person name="McHardy A."/>
            <person name="Meyer F."/>
            <person name="Pohle S."/>
            <person name="Rueckert C."/>
            <person name="Schneiker S."/>
            <person name="Zellermann E.-M."/>
            <person name="Puehler A."/>
            <person name="Eichenlaub R."/>
            <person name="Kaiser O."/>
            <person name="Bartels D."/>
        </authorList>
    </citation>
    <scope>NUCLEOTIDE SEQUENCE [LARGE SCALE GENOMIC DNA]</scope>
    <source>
        <strain>NCPPB 382</strain>
    </source>
</reference>
<sequence length="312" mass="32061">MTSAATTSDVVHARAPGKINVSLTVGALQEDGYHDVATAYQAVGLYEDVWATKADGFSVEFGGSIDTSHLTTGADNLAVRAARLLARSTGYRGGVHLRIEKNVPIAGGMGGGSADAAATLLACDTLWGTERTRDQLLALGAELGADVPFALAGGTAIGTGRGDRLSPALAKGTFQWVLAIAEFGVSTPDVYGELDKHRERHAQDIFPAQQIPQVDSGVLQALRAGDPHMLAEVLHNDLQAPALHLAPGLGEVLQLGEENGALAGIVSGSGPTVAFLAADLDSALELQIALSAARLTVIRATGPVHGARIITG</sequence>
<feature type="chain" id="PRO_0000335706" description="4-diphosphocytidyl-2-C-methyl-D-erythritol kinase">
    <location>
        <begin position="1"/>
        <end position="312"/>
    </location>
</feature>
<feature type="active site" evidence="1">
    <location>
        <position position="18"/>
    </location>
</feature>
<feature type="active site" evidence="1">
    <location>
        <position position="146"/>
    </location>
</feature>
<feature type="binding site" evidence="1">
    <location>
        <begin position="104"/>
        <end position="114"/>
    </location>
    <ligand>
        <name>ATP</name>
        <dbReference type="ChEBI" id="CHEBI:30616"/>
    </ligand>
</feature>
<accession>A5CTL3</accession>